<proteinExistence type="inferred from homology"/>
<dbReference type="EC" id="2.4.1.18" evidence="1"/>
<dbReference type="EMBL" id="BX640431">
    <property type="protein sequence ID" value="CAE38185.1"/>
    <property type="molecule type" value="Genomic_DNA"/>
</dbReference>
<dbReference type="RefSeq" id="WP_010928786.1">
    <property type="nucleotide sequence ID" value="NC_002928.3"/>
</dbReference>
<dbReference type="SMR" id="Q7W6L4"/>
<dbReference type="CAZy" id="CBM48">
    <property type="family name" value="Carbohydrate-Binding Module Family 48"/>
</dbReference>
<dbReference type="CAZy" id="GH13">
    <property type="family name" value="Glycoside Hydrolase Family 13"/>
</dbReference>
<dbReference type="GeneID" id="93204680"/>
<dbReference type="KEGG" id="bpa:BPP2892"/>
<dbReference type="HOGENOM" id="CLU_004245_3_2_4"/>
<dbReference type="UniPathway" id="UPA00164"/>
<dbReference type="Proteomes" id="UP000001421">
    <property type="component" value="Chromosome"/>
</dbReference>
<dbReference type="GO" id="GO:0005829">
    <property type="term" value="C:cytosol"/>
    <property type="evidence" value="ECO:0007669"/>
    <property type="project" value="TreeGrafter"/>
</dbReference>
<dbReference type="GO" id="GO:0003844">
    <property type="term" value="F:1,4-alpha-glucan branching enzyme activity"/>
    <property type="evidence" value="ECO:0007669"/>
    <property type="project" value="UniProtKB-UniRule"/>
</dbReference>
<dbReference type="GO" id="GO:0043169">
    <property type="term" value="F:cation binding"/>
    <property type="evidence" value="ECO:0007669"/>
    <property type="project" value="InterPro"/>
</dbReference>
<dbReference type="GO" id="GO:0004553">
    <property type="term" value="F:hydrolase activity, hydrolyzing O-glycosyl compounds"/>
    <property type="evidence" value="ECO:0007669"/>
    <property type="project" value="InterPro"/>
</dbReference>
<dbReference type="GO" id="GO:0005978">
    <property type="term" value="P:glycogen biosynthetic process"/>
    <property type="evidence" value="ECO:0007669"/>
    <property type="project" value="UniProtKB-UniRule"/>
</dbReference>
<dbReference type="CDD" id="cd11322">
    <property type="entry name" value="AmyAc_Glg_BE"/>
    <property type="match status" value="1"/>
</dbReference>
<dbReference type="CDD" id="cd02855">
    <property type="entry name" value="E_set_GBE_prok_N"/>
    <property type="match status" value="1"/>
</dbReference>
<dbReference type="FunFam" id="2.60.40.10:FF:000169">
    <property type="entry name" value="1,4-alpha-glucan branching enzyme GlgB"/>
    <property type="match status" value="1"/>
</dbReference>
<dbReference type="FunFam" id="2.60.40.1180:FF:000002">
    <property type="entry name" value="1,4-alpha-glucan branching enzyme GlgB"/>
    <property type="match status" value="1"/>
</dbReference>
<dbReference type="FunFam" id="3.20.20.80:FF:000003">
    <property type="entry name" value="1,4-alpha-glucan branching enzyme GlgB"/>
    <property type="match status" value="1"/>
</dbReference>
<dbReference type="Gene3D" id="3.20.20.80">
    <property type="entry name" value="Glycosidases"/>
    <property type="match status" value="1"/>
</dbReference>
<dbReference type="Gene3D" id="2.60.40.1180">
    <property type="entry name" value="Golgi alpha-mannosidase II"/>
    <property type="match status" value="1"/>
</dbReference>
<dbReference type="Gene3D" id="2.60.40.10">
    <property type="entry name" value="Immunoglobulins"/>
    <property type="match status" value="2"/>
</dbReference>
<dbReference type="HAMAP" id="MF_00685">
    <property type="entry name" value="GlgB"/>
    <property type="match status" value="1"/>
</dbReference>
<dbReference type="InterPro" id="IPR006048">
    <property type="entry name" value="A-amylase/branching_C"/>
</dbReference>
<dbReference type="InterPro" id="IPR037439">
    <property type="entry name" value="Branching_enzy"/>
</dbReference>
<dbReference type="InterPro" id="IPR006407">
    <property type="entry name" value="GlgB"/>
</dbReference>
<dbReference type="InterPro" id="IPR054169">
    <property type="entry name" value="GlgB_N"/>
</dbReference>
<dbReference type="InterPro" id="IPR044143">
    <property type="entry name" value="GlgB_N_E_set_prok"/>
</dbReference>
<dbReference type="InterPro" id="IPR006047">
    <property type="entry name" value="Glyco_hydro_13_cat_dom"/>
</dbReference>
<dbReference type="InterPro" id="IPR004193">
    <property type="entry name" value="Glyco_hydro_13_N"/>
</dbReference>
<dbReference type="InterPro" id="IPR013780">
    <property type="entry name" value="Glyco_hydro_b"/>
</dbReference>
<dbReference type="InterPro" id="IPR017853">
    <property type="entry name" value="Glycoside_hydrolase_SF"/>
</dbReference>
<dbReference type="InterPro" id="IPR013783">
    <property type="entry name" value="Ig-like_fold"/>
</dbReference>
<dbReference type="InterPro" id="IPR014756">
    <property type="entry name" value="Ig_E-set"/>
</dbReference>
<dbReference type="NCBIfam" id="TIGR01515">
    <property type="entry name" value="branching_enzym"/>
    <property type="match status" value="1"/>
</dbReference>
<dbReference type="NCBIfam" id="NF003811">
    <property type="entry name" value="PRK05402.1"/>
    <property type="match status" value="1"/>
</dbReference>
<dbReference type="NCBIfam" id="NF008967">
    <property type="entry name" value="PRK12313.1"/>
    <property type="match status" value="1"/>
</dbReference>
<dbReference type="PANTHER" id="PTHR43651">
    <property type="entry name" value="1,4-ALPHA-GLUCAN-BRANCHING ENZYME"/>
    <property type="match status" value="1"/>
</dbReference>
<dbReference type="PANTHER" id="PTHR43651:SF3">
    <property type="entry name" value="1,4-ALPHA-GLUCAN-BRANCHING ENZYME"/>
    <property type="match status" value="1"/>
</dbReference>
<dbReference type="Pfam" id="PF00128">
    <property type="entry name" value="Alpha-amylase"/>
    <property type="match status" value="1"/>
</dbReference>
<dbReference type="Pfam" id="PF02806">
    <property type="entry name" value="Alpha-amylase_C"/>
    <property type="match status" value="1"/>
</dbReference>
<dbReference type="Pfam" id="PF02922">
    <property type="entry name" value="CBM_48"/>
    <property type="match status" value="1"/>
</dbReference>
<dbReference type="Pfam" id="PF22019">
    <property type="entry name" value="GlgB_N"/>
    <property type="match status" value="1"/>
</dbReference>
<dbReference type="PIRSF" id="PIRSF000463">
    <property type="entry name" value="GlgB"/>
    <property type="match status" value="1"/>
</dbReference>
<dbReference type="SMART" id="SM00642">
    <property type="entry name" value="Aamy"/>
    <property type="match status" value="1"/>
</dbReference>
<dbReference type="SUPFAM" id="SSF51445">
    <property type="entry name" value="(Trans)glycosidases"/>
    <property type="match status" value="1"/>
</dbReference>
<dbReference type="SUPFAM" id="SSF81296">
    <property type="entry name" value="E set domains"/>
    <property type="match status" value="1"/>
</dbReference>
<dbReference type="SUPFAM" id="SSF51011">
    <property type="entry name" value="Glycosyl hydrolase domain"/>
    <property type="match status" value="1"/>
</dbReference>
<comment type="function">
    <text evidence="1">Catalyzes the formation of the alpha-1,6-glucosidic linkages in glycogen by scission of a 1,4-alpha-linked oligosaccharide from growing alpha-1,4-glucan chains and the subsequent attachment of the oligosaccharide to the alpha-1,6 position.</text>
</comment>
<comment type="catalytic activity">
    <reaction evidence="1">
        <text>Transfers a segment of a (1-&gt;4)-alpha-D-glucan chain to a primary hydroxy group in a similar glucan chain.</text>
        <dbReference type="EC" id="2.4.1.18"/>
    </reaction>
</comment>
<comment type="pathway">
    <text evidence="1">Glycan biosynthesis; glycogen biosynthesis.</text>
</comment>
<comment type="subunit">
    <text evidence="1">Monomer.</text>
</comment>
<comment type="similarity">
    <text evidence="1">Belongs to the glycosyl hydrolase 13 family. GlgB subfamily.</text>
</comment>
<keyword id="KW-0119">Carbohydrate metabolism</keyword>
<keyword id="KW-0320">Glycogen biosynthesis</keyword>
<keyword id="KW-0321">Glycogen metabolism</keyword>
<keyword id="KW-0328">Glycosyltransferase</keyword>
<keyword id="KW-0808">Transferase</keyword>
<gene>
    <name evidence="1" type="primary">glgB</name>
    <name type="ordered locus">BPP2892</name>
</gene>
<name>GLGB_BORPA</name>
<accession>Q7W6L4</accession>
<protein>
    <recommendedName>
        <fullName evidence="1">1,4-alpha-glucan branching enzyme GlgB</fullName>
        <ecNumber evidence="1">2.4.1.18</ecNumber>
    </recommendedName>
    <alternativeName>
        <fullName evidence="1">1,4-alpha-D-glucan:1,4-alpha-D-glucan 6-glucosyl-transferase</fullName>
    </alternativeName>
    <alternativeName>
        <fullName evidence="1">Alpha-(1-&gt;4)-glucan branching enzyme</fullName>
    </alternativeName>
    <alternativeName>
        <fullName evidence="1">Glycogen branching enzyme</fullName>
        <shortName evidence="1">BE</shortName>
    </alternativeName>
</protein>
<sequence length="731" mass="80183">MMRDSPSIQGTLDAATQHALLAGRHADPFSVLGPHQAGAHTVVRVLAPGARTVMAVLPGGQRTPLLPMQPGLFENTVPGLQPGAPAAYRLCIEWEGGIQHTADPYAFGPVLDTAQLDHCAAGGWRYLAGLLGAHAASVDGCAGTRFALWAPNARRVAVVGDFNGWDGRRHAMRLRYPAGVWELFLPDVGPGARYKFQVLGADGHTVLKADPLARQAEAPPATASIVPDERPFAWTDEAWMEQRAARQRCDAPISIYEVHAGSWFDDAGAPRWQSLAARLPEYARSLGFTHIELLPVMAHPFGGSWGYQPLGLFAPAAAHGAPADFAHFVDRCHEAGLGVILDWVPAHFPDDAHGLARLDGTPLYEHADPHEGRHPDWNTLIYNYGRREVRAFLIASAIHWLRHYHVDGLRVDAVASMLYRDYSRPAGQWIPNRHGGRENLEAIDFLRELNAAVGVQCPGAITVAEESTAWPGVTAPVANGGLGFDYKWNMGWMHDTLRYMRRDPIHRRHHHHDLSFGMVYAYAERFVLPLSHDEVVHGKGSLLGKMPGERAAQLAQLRLYYAFMWAHPGKKLLFMGGEFGQQGEWNHDAMLQWSLLDDPAHRGLQRLVADLNHVYATLPELHCRDADPSGFAWIVGDDADNSVLAFARVDASHCLVAVCNFTPVPRPGYRFGVPHAGDWRVRVDTGATRYGGAGGGPPICLRSEPIPAHGHPQSLVLDLPGFTALYLRHSE</sequence>
<feature type="chain" id="PRO_0000188686" description="1,4-alpha-glucan branching enzyme GlgB">
    <location>
        <begin position="1"/>
        <end position="731"/>
    </location>
</feature>
<feature type="active site" description="Nucleophile" evidence="1">
    <location>
        <position position="412"/>
    </location>
</feature>
<feature type="active site" description="Proton donor" evidence="1">
    <location>
        <position position="465"/>
    </location>
</feature>
<reference key="1">
    <citation type="journal article" date="2003" name="Nat. Genet.">
        <title>Comparative analysis of the genome sequences of Bordetella pertussis, Bordetella parapertussis and Bordetella bronchiseptica.</title>
        <authorList>
            <person name="Parkhill J."/>
            <person name="Sebaihia M."/>
            <person name="Preston A."/>
            <person name="Murphy L.D."/>
            <person name="Thomson N.R."/>
            <person name="Harris D.E."/>
            <person name="Holden M.T.G."/>
            <person name="Churcher C.M."/>
            <person name="Bentley S.D."/>
            <person name="Mungall K.L."/>
            <person name="Cerdeno-Tarraga A.-M."/>
            <person name="Temple L."/>
            <person name="James K.D."/>
            <person name="Harris B."/>
            <person name="Quail M.A."/>
            <person name="Achtman M."/>
            <person name="Atkin R."/>
            <person name="Baker S."/>
            <person name="Basham D."/>
            <person name="Bason N."/>
            <person name="Cherevach I."/>
            <person name="Chillingworth T."/>
            <person name="Collins M."/>
            <person name="Cronin A."/>
            <person name="Davis P."/>
            <person name="Doggett J."/>
            <person name="Feltwell T."/>
            <person name="Goble A."/>
            <person name="Hamlin N."/>
            <person name="Hauser H."/>
            <person name="Holroyd S."/>
            <person name="Jagels K."/>
            <person name="Leather S."/>
            <person name="Moule S."/>
            <person name="Norberczak H."/>
            <person name="O'Neil S."/>
            <person name="Ormond D."/>
            <person name="Price C."/>
            <person name="Rabbinowitsch E."/>
            <person name="Rutter S."/>
            <person name="Sanders M."/>
            <person name="Saunders D."/>
            <person name="Seeger K."/>
            <person name="Sharp S."/>
            <person name="Simmonds M."/>
            <person name="Skelton J."/>
            <person name="Squares R."/>
            <person name="Squares S."/>
            <person name="Stevens K."/>
            <person name="Unwin L."/>
            <person name="Whitehead S."/>
            <person name="Barrell B.G."/>
            <person name="Maskell D.J."/>
        </authorList>
    </citation>
    <scope>NUCLEOTIDE SEQUENCE [LARGE SCALE GENOMIC DNA]</scope>
    <source>
        <strain>12822 / ATCC BAA-587 / NCTC 13253</strain>
    </source>
</reference>
<organism>
    <name type="scientific">Bordetella parapertussis (strain 12822 / ATCC BAA-587 / NCTC 13253)</name>
    <dbReference type="NCBI Taxonomy" id="257311"/>
    <lineage>
        <taxon>Bacteria</taxon>
        <taxon>Pseudomonadati</taxon>
        <taxon>Pseudomonadota</taxon>
        <taxon>Betaproteobacteria</taxon>
        <taxon>Burkholderiales</taxon>
        <taxon>Alcaligenaceae</taxon>
        <taxon>Bordetella</taxon>
    </lineage>
</organism>
<evidence type="ECO:0000255" key="1">
    <source>
        <dbReference type="HAMAP-Rule" id="MF_00685"/>
    </source>
</evidence>